<accession>B5BC31</accession>
<comment type="function">
    <text evidence="1">Catalyzes the conversion of dethiobiotin (DTB) to biotin by the insertion of a sulfur atom into dethiobiotin via a radical-based mechanism.</text>
</comment>
<comment type="catalytic activity">
    <reaction evidence="1">
        <text>(4R,5S)-dethiobiotin + (sulfur carrier)-SH + 2 reduced [2Fe-2S]-[ferredoxin] + 2 S-adenosyl-L-methionine = (sulfur carrier)-H + biotin + 2 5'-deoxyadenosine + 2 L-methionine + 2 oxidized [2Fe-2S]-[ferredoxin]</text>
        <dbReference type="Rhea" id="RHEA:22060"/>
        <dbReference type="Rhea" id="RHEA-COMP:10000"/>
        <dbReference type="Rhea" id="RHEA-COMP:10001"/>
        <dbReference type="Rhea" id="RHEA-COMP:14737"/>
        <dbReference type="Rhea" id="RHEA-COMP:14739"/>
        <dbReference type="ChEBI" id="CHEBI:17319"/>
        <dbReference type="ChEBI" id="CHEBI:29917"/>
        <dbReference type="ChEBI" id="CHEBI:33737"/>
        <dbReference type="ChEBI" id="CHEBI:33738"/>
        <dbReference type="ChEBI" id="CHEBI:57586"/>
        <dbReference type="ChEBI" id="CHEBI:57844"/>
        <dbReference type="ChEBI" id="CHEBI:59789"/>
        <dbReference type="ChEBI" id="CHEBI:64428"/>
        <dbReference type="ChEBI" id="CHEBI:149473"/>
        <dbReference type="EC" id="2.8.1.6"/>
    </reaction>
</comment>
<comment type="cofactor">
    <cofactor evidence="1">
        <name>[4Fe-4S] cluster</name>
        <dbReference type="ChEBI" id="CHEBI:49883"/>
    </cofactor>
    <text evidence="1">Binds 1 [4Fe-4S] cluster. The cluster is coordinated with 3 cysteines and an exchangeable S-adenosyl-L-methionine.</text>
</comment>
<comment type="cofactor">
    <cofactor evidence="1">
        <name>[2Fe-2S] cluster</name>
        <dbReference type="ChEBI" id="CHEBI:190135"/>
    </cofactor>
    <text evidence="1">Binds 1 [2Fe-2S] cluster. The cluster is coordinated with 3 cysteines and 1 arginine.</text>
</comment>
<comment type="pathway">
    <text evidence="1">Cofactor biosynthesis; biotin biosynthesis; biotin from 7,8-diaminononanoate: step 2/2.</text>
</comment>
<comment type="subunit">
    <text evidence="1">Homodimer.</text>
</comment>
<comment type="similarity">
    <text evidence="1">Belongs to the radical SAM superfamily. Biotin synthase family.</text>
</comment>
<evidence type="ECO:0000255" key="1">
    <source>
        <dbReference type="HAMAP-Rule" id="MF_01694"/>
    </source>
</evidence>
<evidence type="ECO:0000255" key="2">
    <source>
        <dbReference type="PROSITE-ProRule" id="PRU01266"/>
    </source>
</evidence>
<name>BIOB_SALPK</name>
<protein>
    <recommendedName>
        <fullName evidence="1">Biotin synthase</fullName>
        <ecNumber evidence="1">2.8.1.6</ecNumber>
    </recommendedName>
</protein>
<keyword id="KW-0001">2Fe-2S</keyword>
<keyword id="KW-0004">4Fe-4S</keyword>
<keyword id="KW-0093">Biotin biosynthesis</keyword>
<keyword id="KW-0408">Iron</keyword>
<keyword id="KW-0411">Iron-sulfur</keyword>
<keyword id="KW-0479">Metal-binding</keyword>
<keyword id="KW-0949">S-adenosyl-L-methionine</keyword>
<keyword id="KW-0808">Transferase</keyword>
<dbReference type="EC" id="2.8.1.6" evidence="1"/>
<dbReference type="EMBL" id="FM200053">
    <property type="protein sequence ID" value="CAR60022.1"/>
    <property type="molecule type" value="Genomic_DNA"/>
</dbReference>
<dbReference type="RefSeq" id="WP_000090727.1">
    <property type="nucleotide sequence ID" value="NC_011147.1"/>
</dbReference>
<dbReference type="SMR" id="B5BC31"/>
<dbReference type="KEGG" id="sek:SSPA1826"/>
<dbReference type="HOGENOM" id="CLU_033172_1_2_6"/>
<dbReference type="UniPathway" id="UPA00078">
    <property type="reaction ID" value="UER00162"/>
</dbReference>
<dbReference type="Proteomes" id="UP000001869">
    <property type="component" value="Chromosome"/>
</dbReference>
<dbReference type="GO" id="GO:0051537">
    <property type="term" value="F:2 iron, 2 sulfur cluster binding"/>
    <property type="evidence" value="ECO:0007669"/>
    <property type="project" value="UniProtKB-KW"/>
</dbReference>
<dbReference type="GO" id="GO:0051539">
    <property type="term" value="F:4 iron, 4 sulfur cluster binding"/>
    <property type="evidence" value="ECO:0007669"/>
    <property type="project" value="UniProtKB-KW"/>
</dbReference>
<dbReference type="GO" id="GO:0004076">
    <property type="term" value="F:biotin synthase activity"/>
    <property type="evidence" value="ECO:0007669"/>
    <property type="project" value="UniProtKB-UniRule"/>
</dbReference>
<dbReference type="GO" id="GO:0005506">
    <property type="term" value="F:iron ion binding"/>
    <property type="evidence" value="ECO:0007669"/>
    <property type="project" value="UniProtKB-UniRule"/>
</dbReference>
<dbReference type="GO" id="GO:0009102">
    <property type="term" value="P:biotin biosynthetic process"/>
    <property type="evidence" value="ECO:0007669"/>
    <property type="project" value="UniProtKB-UniRule"/>
</dbReference>
<dbReference type="CDD" id="cd01335">
    <property type="entry name" value="Radical_SAM"/>
    <property type="match status" value="1"/>
</dbReference>
<dbReference type="FunFam" id="3.20.20.70:FF:000011">
    <property type="entry name" value="Biotin synthase"/>
    <property type="match status" value="1"/>
</dbReference>
<dbReference type="Gene3D" id="3.20.20.70">
    <property type="entry name" value="Aldolase class I"/>
    <property type="match status" value="1"/>
</dbReference>
<dbReference type="HAMAP" id="MF_01694">
    <property type="entry name" value="BioB"/>
    <property type="match status" value="1"/>
</dbReference>
<dbReference type="InterPro" id="IPR013785">
    <property type="entry name" value="Aldolase_TIM"/>
</dbReference>
<dbReference type="InterPro" id="IPR010722">
    <property type="entry name" value="BATS_dom"/>
</dbReference>
<dbReference type="InterPro" id="IPR002684">
    <property type="entry name" value="Biotin_synth/BioAB"/>
</dbReference>
<dbReference type="InterPro" id="IPR024177">
    <property type="entry name" value="Biotin_synthase"/>
</dbReference>
<dbReference type="InterPro" id="IPR006638">
    <property type="entry name" value="Elp3/MiaA/NifB-like_rSAM"/>
</dbReference>
<dbReference type="InterPro" id="IPR007197">
    <property type="entry name" value="rSAM"/>
</dbReference>
<dbReference type="NCBIfam" id="TIGR00433">
    <property type="entry name" value="bioB"/>
    <property type="match status" value="1"/>
</dbReference>
<dbReference type="PANTHER" id="PTHR22976">
    <property type="entry name" value="BIOTIN SYNTHASE"/>
    <property type="match status" value="1"/>
</dbReference>
<dbReference type="PANTHER" id="PTHR22976:SF2">
    <property type="entry name" value="BIOTIN SYNTHASE, MITOCHONDRIAL"/>
    <property type="match status" value="1"/>
</dbReference>
<dbReference type="Pfam" id="PF06968">
    <property type="entry name" value="BATS"/>
    <property type="match status" value="1"/>
</dbReference>
<dbReference type="Pfam" id="PF04055">
    <property type="entry name" value="Radical_SAM"/>
    <property type="match status" value="1"/>
</dbReference>
<dbReference type="PIRSF" id="PIRSF001619">
    <property type="entry name" value="Biotin_synth"/>
    <property type="match status" value="1"/>
</dbReference>
<dbReference type="SFLD" id="SFLDF00272">
    <property type="entry name" value="biotin_synthase"/>
    <property type="match status" value="1"/>
</dbReference>
<dbReference type="SFLD" id="SFLDS00029">
    <property type="entry name" value="Radical_SAM"/>
    <property type="match status" value="1"/>
</dbReference>
<dbReference type="SMART" id="SM00876">
    <property type="entry name" value="BATS"/>
    <property type="match status" value="1"/>
</dbReference>
<dbReference type="SMART" id="SM00729">
    <property type="entry name" value="Elp3"/>
    <property type="match status" value="1"/>
</dbReference>
<dbReference type="SUPFAM" id="SSF102114">
    <property type="entry name" value="Radical SAM enzymes"/>
    <property type="match status" value="1"/>
</dbReference>
<dbReference type="PROSITE" id="PS51918">
    <property type="entry name" value="RADICAL_SAM"/>
    <property type="match status" value="1"/>
</dbReference>
<organism>
    <name type="scientific">Salmonella paratyphi A (strain AKU_12601)</name>
    <dbReference type="NCBI Taxonomy" id="554290"/>
    <lineage>
        <taxon>Bacteria</taxon>
        <taxon>Pseudomonadati</taxon>
        <taxon>Pseudomonadota</taxon>
        <taxon>Gammaproteobacteria</taxon>
        <taxon>Enterobacterales</taxon>
        <taxon>Enterobacteriaceae</taxon>
        <taxon>Salmonella</taxon>
    </lineage>
</organism>
<feature type="chain" id="PRO_0000381606" description="Biotin synthase">
    <location>
        <begin position="1"/>
        <end position="346"/>
    </location>
</feature>
<feature type="domain" description="Radical SAM core" evidence="2">
    <location>
        <begin position="38"/>
        <end position="256"/>
    </location>
</feature>
<feature type="binding site" evidence="1">
    <location>
        <position position="53"/>
    </location>
    <ligand>
        <name>[4Fe-4S] cluster</name>
        <dbReference type="ChEBI" id="CHEBI:49883"/>
        <note>4Fe-4S-S-AdoMet</note>
    </ligand>
</feature>
<feature type="binding site" evidence="1">
    <location>
        <position position="57"/>
    </location>
    <ligand>
        <name>[4Fe-4S] cluster</name>
        <dbReference type="ChEBI" id="CHEBI:49883"/>
        <note>4Fe-4S-S-AdoMet</note>
    </ligand>
</feature>
<feature type="binding site" evidence="1">
    <location>
        <position position="60"/>
    </location>
    <ligand>
        <name>[4Fe-4S] cluster</name>
        <dbReference type="ChEBI" id="CHEBI:49883"/>
        <note>4Fe-4S-S-AdoMet</note>
    </ligand>
</feature>
<feature type="binding site" evidence="1">
    <location>
        <position position="97"/>
    </location>
    <ligand>
        <name>[2Fe-2S] cluster</name>
        <dbReference type="ChEBI" id="CHEBI:190135"/>
    </ligand>
</feature>
<feature type="binding site" evidence="1">
    <location>
        <position position="128"/>
    </location>
    <ligand>
        <name>[2Fe-2S] cluster</name>
        <dbReference type="ChEBI" id="CHEBI:190135"/>
    </ligand>
</feature>
<feature type="binding site" evidence="1">
    <location>
        <position position="188"/>
    </location>
    <ligand>
        <name>[2Fe-2S] cluster</name>
        <dbReference type="ChEBI" id="CHEBI:190135"/>
    </ligand>
</feature>
<feature type="binding site" evidence="1">
    <location>
        <position position="260"/>
    </location>
    <ligand>
        <name>[2Fe-2S] cluster</name>
        <dbReference type="ChEBI" id="CHEBI:190135"/>
    </ligand>
</feature>
<proteinExistence type="inferred from homology"/>
<gene>
    <name evidence="1" type="primary">bioB</name>
    <name type="ordered locus">SSPA1826</name>
</gene>
<sequence length="346" mass="38776">MARHPRWTLSQVTELFEKPLLELLFEAQQIHRQHFDPQQVQVSTLLSIKTGACPEDCKYCPQSSRYKTGLEAERLMEVEQVLDSARKAKNAGSTRFCMGAAWKNPHERDMPYLEQIVQGVKAMGLETCMTLGMLNESQAQRLANAGLDYYNHNLDTSPEFYGNIITTRTYQERLDTLEKVREAGIKVCSGGIVGLGETVTDRAGLLLQLANLPTPPESVPINMLVKVKGTPLADNDDVDAFDFIRTIAVARIMMPTSYVRLSAGREQMNEQTQAMCFMAGANSIFYGCKLLTTPNPAEDKDLQLFRKLGLNPQQTRVLAGDNEQQQRLEQTLMTPDTDDYYNAAAL</sequence>
<reference key="1">
    <citation type="journal article" date="2009" name="BMC Genomics">
        <title>Pseudogene accumulation in the evolutionary histories of Salmonella enterica serovars Paratyphi A and Typhi.</title>
        <authorList>
            <person name="Holt K.E."/>
            <person name="Thomson N.R."/>
            <person name="Wain J."/>
            <person name="Langridge G.C."/>
            <person name="Hasan R."/>
            <person name="Bhutta Z.A."/>
            <person name="Quail M.A."/>
            <person name="Norbertczak H."/>
            <person name="Walker D."/>
            <person name="Simmonds M."/>
            <person name="White B."/>
            <person name="Bason N."/>
            <person name="Mungall K."/>
            <person name="Dougan G."/>
            <person name="Parkhill J."/>
        </authorList>
    </citation>
    <scope>NUCLEOTIDE SEQUENCE [LARGE SCALE GENOMIC DNA]</scope>
    <source>
        <strain>AKU_12601</strain>
    </source>
</reference>